<feature type="initiator methionine" description="Removed" evidence="1">
    <location>
        <position position="1"/>
    </location>
</feature>
<feature type="chain" id="PRO_0000213415" description="Microtubule-associated protein RP/EB family member 1">
    <location>
        <begin position="2"/>
        <end position="268"/>
    </location>
</feature>
<feature type="domain" description="Calponin-homology (CH)" evidence="3">
    <location>
        <begin position="14"/>
        <end position="116"/>
    </location>
</feature>
<feature type="domain" description="EB1 C-terminal" evidence="4">
    <location>
        <begin position="185"/>
        <end position="255"/>
    </location>
</feature>
<feature type="region of interest" description="Interaction with MTUS2/TIP150" evidence="1">
    <location>
        <begin position="124"/>
        <end position="268"/>
    </location>
</feature>
<feature type="region of interest" description="Disordered" evidence="5">
    <location>
        <begin position="147"/>
        <end position="184"/>
    </location>
</feature>
<feature type="region of interest" description="Interaction with CDK5RAP2" evidence="1">
    <location>
        <begin position="185"/>
        <end position="268"/>
    </location>
</feature>
<feature type="region of interest" description="Interaction with APC" evidence="1">
    <location>
        <begin position="206"/>
        <end position="211"/>
    </location>
</feature>
<feature type="region of interest" description="DCTN1-binding" evidence="1">
    <location>
        <begin position="208"/>
        <end position="268"/>
    </location>
</feature>
<feature type="region of interest" description="APC-binding" evidence="1">
    <location>
        <begin position="220"/>
        <end position="242"/>
    </location>
</feature>
<feature type="region of interest" description="Interaction with SKA1" evidence="1">
    <location>
        <begin position="232"/>
        <end position="255"/>
    </location>
</feature>
<feature type="compositionally biased region" description="Low complexity" evidence="5">
    <location>
        <begin position="147"/>
        <end position="160"/>
    </location>
</feature>
<feature type="compositionally biased region" description="Polar residues" evidence="5">
    <location>
        <begin position="163"/>
        <end position="172"/>
    </location>
</feature>
<feature type="modified residue" description="N-acetylalanine" evidence="1">
    <location>
        <position position="2"/>
    </location>
</feature>
<feature type="modified residue" description="N6-crotonyllysine" evidence="1">
    <location>
        <position position="66"/>
    </location>
</feature>
<feature type="modified residue" description="Phosphotyrosine" evidence="1">
    <location>
        <position position="124"/>
    </location>
</feature>
<feature type="modified residue" description="Phosphoserine" evidence="1">
    <location>
        <position position="155"/>
    </location>
</feature>
<feature type="modified residue" description="N6-acetyllysine" evidence="1">
    <location>
        <position position="220"/>
    </location>
</feature>
<comment type="function">
    <text evidence="1 2">Plus-end tracking protein (+TIP) that binds to the plus-end of microtubules and regulates the dynamics of the microtubule cytoskeleton. Recruits other +TIP proteins to microtubules by binding to a conserved Ser-X-Leu-Pro (SXLP) motif in their polypeptide chains. Promotes cytoplasmic microtubule nucleation and elongation. Involved in mitotic spindle positioning by stabilizing microtubules and promoting dynamic connection between astral microtubules and the cortex during mitotic chromosome segregation. Assists chromosome alignment in metaphase by recruiting the SKA complex to the spindle and stabilizing its interactions with microtubule bundles (K-fibers). Also acts as a regulator of minus-end microtubule organization: interacts with the complex formed by AKAP9 and PDE4DIP, leading to recruit CAMSAP2 to the Golgi apparatus, thereby tethering non-centrosomal minus-end microtubules to the Golgi, an important step for polarized cell movement. Promotes elongation of CAMSAP2-decorated microtubule stretches on the minus-end of microtubules. Acts as a regulator of autophagosome transport via interaction with CAMSAP2 (By similarity). Functions downstream of Rho GTPases and DIAPH1 in stable microtubule formation (By similarity). May play a role in cell migration (By similarity).</text>
</comment>
<comment type="subunit">
    <text evidence="1 2">Homodimer. Heterodimer with MAPRE3. Interacts with DCTN1, DCTN2, TERF1 and dynein intermediate chain (By similarity). Interaction with DIAPH1 and DIAPH2 (By similarity). Interacts (via C-terminal residues 206-211) with APC (via C-terminal residues 2674-2845); the interaction inhibits association with and bundling of F-actin (By similarity). Interacts with CLASP2, DST, KIF2C and STIM1; probably required for their targeting to the growing microtubule plus ends. Interacts with MTUS2; interaction is direct and probably targets MTUS2 to microtubules. Interacts (via C-terminus) with SKA1 (via SXIP motif); the interaction is direct and stabilizes the kinetochore-microtubule attachment of the SKA1 complex. Interacts with APC2. Interacts with CLASP1. Interacts with CDK5RAP2 (By similarity). Interacts with MACF1. Interacts with RABL2/RABL2A; binds preferentially to GTP-bound RABL2. Interacts with KCNAB2 (By similarity). Interacts (via C-terminus) with CLIP1. Interacts with SLAIN2 and SLAIN1. Interacts with KIF18B; this interaction is required for efficient accumulation of KIF18B at microtubule plus ends. Interacts with MISP. Interacts with KNSTRN. Interacts with NCKAP5L. Interacts with CAMSAP2. Interacts with PDE4DIP isoform 13/MMG8/SMYLE; this interaction is required for its recruitment to the Golgi apparatus. Forms a pericentrosomal complex with AKAP9, CDK5RAP2 and PDE4DIP isoform 13/MMG8/SMYLE; within this complex, MAPRE1 binding to CDK5RAP2 may be mediated by PDE4DIP (By similarity). Interacts with AKNA (By similarity). Interacts with GAS2L1, GAS2L2, and GAS2L3 (By similarity).</text>
</comment>
<comment type="subcellular location">
    <subcellularLocation>
        <location evidence="1">Cytoplasm</location>
        <location evidence="1">Cytoskeleton</location>
    </subcellularLocation>
    <subcellularLocation>
        <location evidence="1">Cytoplasm</location>
        <location evidence="1">Cytoskeleton</location>
        <location evidence="1">Microtubule organizing center</location>
        <location evidence="1">Centrosome</location>
    </subcellularLocation>
    <subcellularLocation>
        <location evidence="1">Golgi apparatus</location>
    </subcellularLocation>
    <subcellularLocation>
        <location evidence="1">Cytoplasm</location>
        <location evidence="1">Cytoskeleton</location>
        <location evidence="1">Spindle</location>
    </subcellularLocation>
    <subcellularLocation>
        <location evidence="1">Cytoplasm</location>
        <location evidence="1">Cytoskeleton</location>
        <location evidence="1">Spindle pole</location>
    </subcellularLocation>
    <text evidence="1">Associated with the microtubule growing distal tips. In addition to localizing to microtubule plus-ends, also exhibits some localization along the length of the microtubules. Recruitment to the Golgi apparatus requires the presence of PDE4DIP isoform 13/MMG8/SMYLE.</text>
</comment>
<comment type="domain">
    <text evidence="1">Composed of two functionally independent domains. The N-terminal domain forms a hydrophobic cleft involved in microtubule binding and the C-terminal is involved in the formation of mutually exclusive complexes with APC and DCTN1.</text>
</comment>
<comment type="PTM">
    <text evidence="1">Acetylation at Lys-220 by KAT2B/PCAF promotes dynamic kinetochore-microtubule interactions in early mitosis.</text>
</comment>
<comment type="PTM">
    <text evidence="1">Crotonylated by KAT5 during mitosis, promoting astral microtubule plasticity and dynamic connection between astral microtubules and the cortex during mitotic chromosome segregation, thereby ensuring accurate spindle positioning in mitosis. Decrotonylated by HDAC3.</text>
</comment>
<comment type="similarity">
    <text evidence="6">Belongs to the MAPRE family.</text>
</comment>
<name>MARE1_BOVIN</name>
<sequence>MAVNVYSTSVTSDNLSRHDMLAWINESLQLNLTKIEQLCSGAAYCQFMDMLFPGSIALKKVKFQAKLEHEYIQNFKILQAGFKRMGVDKIIPVDKLVKGKFQDNFEFVQWFKKFFDANYDGKEYDPVAARQGQETAMAPSLVAPALNKPKKPLSSSSAAPQRPITTHRTTATPKAGPGVVRKNPGVGNGDDEAAELMQQVNVLKLTVEDLEKERDFYFGKLRNIELICQENEGENNPVLQRIVDILYATDEGFVIPDEGGPQEEQEEY</sequence>
<protein>
    <recommendedName>
        <fullName>Microtubule-associated protein RP/EB family member 1</fullName>
    </recommendedName>
    <alternativeName>
        <fullName>APC-binding protein EB1</fullName>
    </alternativeName>
    <alternativeName>
        <fullName>End-binding protein 1</fullName>
        <shortName>EB1</shortName>
    </alternativeName>
</protein>
<proteinExistence type="evidence at transcript level"/>
<organism>
    <name type="scientific">Bos taurus</name>
    <name type="common">Bovine</name>
    <dbReference type="NCBI Taxonomy" id="9913"/>
    <lineage>
        <taxon>Eukaryota</taxon>
        <taxon>Metazoa</taxon>
        <taxon>Chordata</taxon>
        <taxon>Craniata</taxon>
        <taxon>Vertebrata</taxon>
        <taxon>Euteleostomi</taxon>
        <taxon>Mammalia</taxon>
        <taxon>Eutheria</taxon>
        <taxon>Laurasiatheria</taxon>
        <taxon>Artiodactyla</taxon>
        <taxon>Ruminantia</taxon>
        <taxon>Pecora</taxon>
        <taxon>Bovidae</taxon>
        <taxon>Bovinae</taxon>
        <taxon>Bos</taxon>
    </lineage>
</organism>
<dbReference type="EMBL" id="BC103412">
    <property type="protein sequence ID" value="AAI03413.1"/>
    <property type="molecule type" value="mRNA"/>
</dbReference>
<dbReference type="RefSeq" id="NP_001068802.1">
    <property type="nucleotide sequence ID" value="NM_001075334.2"/>
</dbReference>
<dbReference type="RefSeq" id="XP_005214667.2">
    <property type="nucleotide sequence ID" value="XM_005214610.3"/>
</dbReference>
<dbReference type="RefSeq" id="XP_024856211.1">
    <property type="nucleotide sequence ID" value="XM_025000443.2"/>
</dbReference>
<dbReference type="RefSeq" id="XP_059748474.1">
    <property type="nucleotide sequence ID" value="XM_059892491.1"/>
</dbReference>
<dbReference type="BMRB" id="Q3ZBD9"/>
<dbReference type="SMR" id="Q3ZBD9"/>
<dbReference type="FunCoup" id="Q3ZBD9">
    <property type="interactions" value="3032"/>
</dbReference>
<dbReference type="STRING" id="9913.ENSBTAP00000041967"/>
<dbReference type="PaxDb" id="9913-ENSBTAP00000041967"/>
<dbReference type="PeptideAtlas" id="Q3ZBD9"/>
<dbReference type="GeneID" id="507845"/>
<dbReference type="KEGG" id="bta:507845"/>
<dbReference type="CTD" id="22919"/>
<dbReference type="VEuPathDB" id="HostDB:ENSBTAG00000003908"/>
<dbReference type="eggNOG" id="KOG3000">
    <property type="taxonomic scope" value="Eukaryota"/>
</dbReference>
<dbReference type="InParanoid" id="Q3ZBD9"/>
<dbReference type="OMA" id="TVLEHEY"/>
<dbReference type="OrthoDB" id="2119228at2759"/>
<dbReference type="Reactome" id="R-BTA-141444">
    <property type="pathway name" value="Amplification of signal from unattached kinetochores via a MAD2 inhibitory signal"/>
</dbReference>
<dbReference type="Reactome" id="R-BTA-2467813">
    <property type="pathway name" value="Separation of Sister Chromatids"/>
</dbReference>
<dbReference type="Reactome" id="R-BTA-2500257">
    <property type="pathway name" value="Resolution of Sister Chromatid Cohesion"/>
</dbReference>
<dbReference type="Reactome" id="R-BTA-2565942">
    <property type="pathway name" value="Regulation of PLK1 Activity at G2/M Transition"/>
</dbReference>
<dbReference type="Reactome" id="R-BTA-380259">
    <property type="pathway name" value="Loss of Nlp from mitotic centrosomes"/>
</dbReference>
<dbReference type="Reactome" id="R-BTA-380270">
    <property type="pathway name" value="Recruitment of mitotic centrosome proteins and complexes"/>
</dbReference>
<dbReference type="Reactome" id="R-BTA-380284">
    <property type="pathway name" value="Loss of proteins required for interphase microtubule organization from the centrosome"/>
</dbReference>
<dbReference type="Reactome" id="R-BTA-380320">
    <property type="pathway name" value="Recruitment of NuMA to mitotic centrosomes"/>
</dbReference>
<dbReference type="Reactome" id="R-BTA-5620912">
    <property type="pathway name" value="Anchoring of the basal body to the plasma membrane"/>
</dbReference>
<dbReference type="Reactome" id="R-BTA-5663220">
    <property type="pathway name" value="RHO GTPases Activate Formins"/>
</dbReference>
<dbReference type="Reactome" id="R-BTA-68877">
    <property type="pathway name" value="Mitotic Prometaphase"/>
</dbReference>
<dbReference type="Reactome" id="R-BTA-8852276">
    <property type="pathway name" value="The role of GTSE1 in G2/M progression after G2 checkpoint"/>
</dbReference>
<dbReference type="Reactome" id="R-BTA-8854518">
    <property type="pathway name" value="AURKA Activation by TPX2"/>
</dbReference>
<dbReference type="Reactome" id="R-BTA-9648025">
    <property type="pathway name" value="EML4 and NUDC in mitotic spindle formation"/>
</dbReference>
<dbReference type="Proteomes" id="UP000009136">
    <property type="component" value="Chromosome 13"/>
</dbReference>
<dbReference type="Bgee" id="ENSBTAG00000003908">
    <property type="expression patterns" value="Expressed in oocyte and 103 other cell types or tissues"/>
</dbReference>
<dbReference type="GO" id="GO:0005813">
    <property type="term" value="C:centrosome"/>
    <property type="evidence" value="ECO:0007669"/>
    <property type="project" value="UniProtKB-SubCell"/>
</dbReference>
<dbReference type="GO" id="GO:0030981">
    <property type="term" value="C:cortical microtubule cytoskeleton"/>
    <property type="evidence" value="ECO:0000250"/>
    <property type="project" value="UniProtKB"/>
</dbReference>
<dbReference type="GO" id="GO:0005881">
    <property type="term" value="C:cytoplasmic microtubule"/>
    <property type="evidence" value="ECO:0000318"/>
    <property type="project" value="GO_Central"/>
</dbReference>
<dbReference type="GO" id="GO:0005794">
    <property type="term" value="C:Golgi apparatus"/>
    <property type="evidence" value="ECO:0007669"/>
    <property type="project" value="UniProtKB-SubCell"/>
</dbReference>
<dbReference type="GO" id="GO:0005874">
    <property type="term" value="C:microtubule"/>
    <property type="evidence" value="ECO:0000250"/>
    <property type="project" value="UniProtKB"/>
</dbReference>
<dbReference type="GO" id="GO:0005815">
    <property type="term" value="C:microtubule organizing center"/>
    <property type="evidence" value="ECO:0000318"/>
    <property type="project" value="GO_Central"/>
</dbReference>
<dbReference type="GO" id="GO:0035371">
    <property type="term" value="C:microtubule plus-end"/>
    <property type="evidence" value="ECO:0000318"/>
    <property type="project" value="GO_Central"/>
</dbReference>
<dbReference type="GO" id="GO:0097431">
    <property type="term" value="C:mitotic spindle pole"/>
    <property type="evidence" value="ECO:0000250"/>
    <property type="project" value="UniProtKB"/>
</dbReference>
<dbReference type="GO" id="GO:0051233">
    <property type="term" value="C:spindle midzone"/>
    <property type="evidence" value="ECO:0000318"/>
    <property type="project" value="GO_Central"/>
</dbReference>
<dbReference type="GO" id="GO:0051010">
    <property type="term" value="F:microtubule plus-end binding"/>
    <property type="evidence" value="ECO:0000250"/>
    <property type="project" value="UniProtKB"/>
</dbReference>
<dbReference type="GO" id="GO:0051315">
    <property type="term" value="P:attachment of mitotic spindle microtubules to kinetochore"/>
    <property type="evidence" value="ECO:0000250"/>
    <property type="project" value="UniProtKB"/>
</dbReference>
<dbReference type="GO" id="GO:0051301">
    <property type="term" value="P:cell division"/>
    <property type="evidence" value="ECO:0007669"/>
    <property type="project" value="UniProtKB-KW"/>
</dbReference>
<dbReference type="GO" id="GO:0000132">
    <property type="term" value="P:establishment of mitotic spindle orientation"/>
    <property type="evidence" value="ECO:0000250"/>
    <property type="project" value="UniProtKB"/>
</dbReference>
<dbReference type="GO" id="GO:0031115">
    <property type="term" value="P:negative regulation of microtubule polymerization"/>
    <property type="evidence" value="ECO:0000250"/>
    <property type="project" value="UniProtKB"/>
</dbReference>
<dbReference type="GO" id="GO:1902888">
    <property type="term" value="P:protein localization to astral microtubule"/>
    <property type="evidence" value="ECO:0000250"/>
    <property type="project" value="UniProtKB"/>
</dbReference>
<dbReference type="GO" id="GO:0035372">
    <property type="term" value="P:protein localization to microtubule"/>
    <property type="evidence" value="ECO:0000250"/>
    <property type="project" value="UniProtKB"/>
</dbReference>
<dbReference type="GO" id="GO:0031110">
    <property type="term" value="P:regulation of microtubule polymerization or depolymerization"/>
    <property type="evidence" value="ECO:0000318"/>
    <property type="project" value="GO_Central"/>
</dbReference>
<dbReference type="GO" id="GO:0051225">
    <property type="term" value="P:spindle assembly"/>
    <property type="evidence" value="ECO:0000318"/>
    <property type="project" value="GO_Central"/>
</dbReference>
<dbReference type="CDD" id="cd00014">
    <property type="entry name" value="CH_SF"/>
    <property type="match status" value="1"/>
</dbReference>
<dbReference type="FunFam" id="1.20.5.1430:FF:000001">
    <property type="entry name" value="microtubule-associated protein RP/EB family member 1"/>
    <property type="match status" value="1"/>
</dbReference>
<dbReference type="FunFam" id="1.10.418.10:FF:000007">
    <property type="entry name" value="Microtubule-associated protein, RP/EB family, member 2"/>
    <property type="match status" value="1"/>
</dbReference>
<dbReference type="Gene3D" id="1.20.5.1430">
    <property type="match status" value="1"/>
</dbReference>
<dbReference type="Gene3D" id="1.10.418.10">
    <property type="entry name" value="Calponin-like domain"/>
    <property type="match status" value="1"/>
</dbReference>
<dbReference type="InterPro" id="IPR001715">
    <property type="entry name" value="CH_dom"/>
</dbReference>
<dbReference type="InterPro" id="IPR036872">
    <property type="entry name" value="CH_dom_sf"/>
</dbReference>
<dbReference type="InterPro" id="IPR004953">
    <property type="entry name" value="EB1_C"/>
</dbReference>
<dbReference type="InterPro" id="IPR036133">
    <property type="entry name" value="EB1_C_sf"/>
</dbReference>
<dbReference type="InterPro" id="IPR027328">
    <property type="entry name" value="MAPRE"/>
</dbReference>
<dbReference type="PANTHER" id="PTHR10623">
    <property type="entry name" value="MICROTUBULE-ASSOCIATED PROTEIN RP/EB FAMILY MEMBER"/>
    <property type="match status" value="1"/>
</dbReference>
<dbReference type="Pfam" id="PF00307">
    <property type="entry name" value="CH"/>
    <property type="match status" value="1"/>
</dbReference>
<dbReference type="Pfam" id="PF03271">
    <property type="entry name" value="EB1"/>
    <property type="match status" value="1"/>
</dbReference>
<dbReference type="SUPFAM" id="SSF47576">
    <property type="entry name" value="Calponin-homology domain, CH-domain"/>
    <property type="match status" value="1"/>
</dbReference>
<dbReference type="SUPFAM" id="SSF140612">
    <property type="entry name" value="EB1 dimerisation domain-like"/>
    <property type="match status" value="1"/>
</dbReference>
<dbReference type="PROSITE" id="PS50021">
    <property type="entry name" value="CH"/>
    <property type="match status" value="1"/>
</dbReference>
<dbReference type="PROSITE" id="PS51230">
    <property type="entry name" value="EB1_C"/>
    <property type="match status" value="1"/>
</dbReference>
<gene>
    <name type="primary">MAPRE1</name>
</gene>
<keyword id="KW-0007">Acetylation</keyword>
<keyword id="KW-0131">Cell cycle</keyword>
<keyword id="KW-0132">Cell division</keyword>
<keyword id="KW-0963">Cytoplasm</keyword>
<keyword id="KW-0206">Cytoskeleton</keyword>
<keyword id="KW-0333">Golgi apparatus</keyword>
<keyword id="KW-0493">Microtubule</keyword>
<keyword id="KW-0498">Mitosis</keyword>
<keyword id="KW-0597">Phosphoprotein</keyword>
<keyword id="KW-1185">Reference proteome</keyword>
<accession>Q3ZBD9</accession>
<reference key="1">
    <citation type="submission" date="2005-08" db="EMBL/GenBank/DDBJ databases">
        <authorList>
            <consortium name="NIH - Mammalian Gene Collection (MGC) project"/>
        </authorList>
    </citation>
    <scope>NUCLEOTIDE SEQUENCE [LARGE SCALE MRNA]</scope>
    <source>
        <strain>Crossbred X Angus</strain>
        <tissue>Ileum</tissue>
    </source>
</reference>
<evidence type="ECO:0000250" key="1">
    <source>
        <dbReference type="UniProtKB" id="Q15691"/>
    </source>
</evidence>
<evidence type="ECO:0000250" key="2">
    <source>
        <dbReference type="UniProtKB" id="Q61166"/>
    </source>
</evidence>
<evidence type="ECO:0000255" key="3">
    <source>
        <dbReference type="PROSITE-ProRule" id="PRU00044"/>
    </source>
</evidence>
<evidence type="ECO:0000255" key="4">
    <source>
        <dbReference type="PROSITE-ProRule" id="PRU00576"/>
    </source>
</evidence>
<evidence type="ECO:0000256" key="5">
    <source>
        <dbReference type="SAM" id="MobiDB-lite"/>
    </source>
</evidence>
<evidence type="ECO:0000305" key="6"/>